<name>ISPF_EHRCJ</name>
<dbReference type="EC" id="4.6.1.12" evidence="1"/>
<dbReference type="EMBL" id="CP000107">
    <property type="protein sequence ID" value="AAZ68153.1"/>
    <property type="molecule type" value="Genomic_DNA"/>
</dbReference>
<dbReference type="RefSeq" id="WP_011304231.1">
    <property type="nucleotide sequence ID" value="NC_007354.1"/>
</dbReference>
<dbReference type="SMR" id="Q3YT02"/>
<dbReference type="FunCoup" id="Q3YT02">
    <property type="interactions" value="224"/>
</dbReference>
<dbReference type="STRING" id="269484.Ecaj_0102"/>
<dbReference type="KEGG" id="ecn:Ecaj_0102"/>
<dbReference type="eggNOG" id="COG0245">
    <property type="taxonomic scope" value="Bacteria"/>
</dbReference>
<dbReference type="HOGENOM" id="CLU_084630_2_0_5"/>
<dbReference type="InParanoid" id="Q3YT02"/>
<dbReference type="UniPathway" id="UPA00056">
    <property type="reaction ID" value="UER00095"/>
</dbReference>
<dbReference type="Proteomes" id="UP000000435">
    <property type="component" value="Chromosome"/>
</dbReference>
<dbReference type="GO" id="GO:0008685">
    <property type="term" value="F:2-C-methyl-D-erythritol 2,4-cyclodiphosphate synthase activity"/>
    <property type="evidence" value="ECO:0007669"/>
    <property type="project" value="UniProtKB-UniRule"/>
</dbReference>
<dbReference type="GO" id="GO:0046872">
    <property type="term" value="F:metal ion binding"/>
    <property type="evidence" value="ECO:0007669"/>
    <property type="project" value="UniProtKB-KW"/>
</dbReference>
<dbReference type="GO" id="GO:0019288">
    <property type="term" value="P:isopentenyl diphosphate biosynthetic process, methylerythritol 4-phosphate pathway"/>
    <property type="evidence" value="ECO:0007669"/>
    <property type="project" value="UniProtKB-UniRule"/>
</dbReference>
<dbReference type="GO" id="GO:0016114">
    <property type="term" value="P:terpenoid biosynthetic process"/>
    <property type="evidence" value="ECO:0007669"/>
    <property type="project" value="InterPro"/>
</dbReference>
<dbReference type="CDD" id="cd00554">
    <property type="entry name" value="MECDP_synthase"/>
    <property type="match status" value="1"/>
</dbReference>
<dbReference type="Gene3D" id="3.30.1330.50">
    <property type="entry name" value="2-C-methyl-D-erythritol 2,4-cyclodiphosphate synthase"/>
    <property type="match status" value="1"/>
</dbReference>
<dbReference type="HAMAP" id="MF_00107">
    <property type="entry name" value="IspF"/>
    <property type="match status" value="1"/>
</dbReference>
<dbReference type="InterPro" id="IPR003526">
    <property type="entry name" value="MECDP_synthase"/>
</dbReference>
<dbReference type="InterPro" id="IPR020555">
    <property type="entry name" value="MECDP_synthase_CS"/>
</dbReference>
<dbReference type="InterPro" id="IPR036571">
    <property type="entry name" value="MECDP_synthase_sf"/>
</dbReference>
<dbReference type="NCBIfam" id="TIGR00151">
    <property type="entry name" value="ispF"/>
    <property type="match status" value="1"/>
</dbReference>
<dbReference type="PANTHER" id="PTHR43181">
    <property type="entry name" value="2-C-METHYL-D-ERYTHRITOL 2,4-CYCLODIPHOSPHATE SYNTHASE, CHLOROPLASTIC"/>
    <property type="match status" value="1"/>
</dbReference>
<dbReference type="PANTHER" id="PTHR43181:SF1">
    <property type="entry name" value="2-C-METHYL-D-ERYTHRITOL 2,4-CYCLODIPHOSPHATE SYNTHASE, CHLOROPLASTIC"/>
    <property type="match status" value="1"/>
</dbReference>
<dbReference type="Pfam" id="PF02542">
    <property type="entry name" value="YgbB"/>
    <property type="match status" value="1"/>
</dbReference>
<dbReference type="SUPFAM" id="SSF69765">
    <property type="entry name" value="IpsF-like"/>
    <property type="match status" value="1"/>
</dbReference>
<dbReference type="PROSITE" id="PS01350">
    <property type="entry name" value="ISPF"/>
    <property type="match status" value="1"/>
</dbReference>
<proteinExistence type="inferred from homology"/>
<feature type="chain" id="PRO_0000237722" description="2-C-methyl-D-erythritol 2,4-cyclodiphosphate synthase">
    <location>
        <begin position="1"/>
        <end position="173"/>
    </location>
</feature>
<feature type="binding site" evidence="1">
    <location>
        <begin position="17"/>
        <end position="19"/>
    </location>
    <ligand>
        <name>4-CDP-2-C-methyl-D-erythritol 2-phosphate</name>
        <dbReference type="ChEBI" id="CHEBI:57919"/>
    </ligand>
</feature>
<feature type="binding site" evidence="1">
    <location>
        <position position="17"/>
    </location>
    <ligand>
        <name>a divalent metal cation</name>
        <dbReference type="ChEBI" id="CHEBI:60240"/>
    </ligand>
</feature>
<feature type="binding site" evidence="1">
    <location>
        <position position="19"/>
    </location>
    <ligand>
        <name>a divalent metal cation</name>
        <dbReference type="ChEBI" id="CHEBI:60240"/>
    </ligand>
</feature>
<feature type="binding site" evidence="1">
    <location>
        <begin position="49"/>
        <end position="50"/>
    </location>
    <ligand>
        <name>4-CDP-2-C-methyl-D-erythritol 2-phosphate</name>
        <dbReference type="ChEBI" id="CHEBI:57919"/>
    </ligand>
</feature>
<feature type="binding site" evidence="1">
    <location>
        <position position="57"/>
    </location>
    <ligand>
        <name>a divalent metal cation</name>
        <dbReference type="ChEBI" id="CHEBI:60240"/>
    </ligand>
</feature>
<feature type="binding site" evidence="1">
    <location>
        <begin position="76"/>
        <end position="80"/>
    </location>
    <ligand>
        <name>4-CDP-2-C-methyl-D-erythritol 2-phosphate</name>
        <dbReference type="ChEBI" id="CHEBI:57919"/>
    </ligand>
</feature>
<feature type="binding site" evidence="1">
    <location>
        <begin position="147"/>
        <end position="150"/>
    </location>
    <ligand>
        <name>4-CDP-2-C-methyl-D-erythritol 2-phosphate</name>
        <dbReference type="ChEBI" id="CHEBI:57919"/>
    </ligand>
</feature>
<feature type="binding site" evidence="1">
    <location>
        <position position="154"/>
    </location>
    <ligand>
        <name>4-CDP-2-C-methyl-D-erythritol 2-phosphate</name>
        <dbReference type="ChEBI" id="CHEBI:57919"/>
    </ligand>
</feature>
<feature type="binding site" evidence="1">
    <location>
        <position position="157"/>
    </location>
    <ligand>
        <name>4-CDP-2-C-methyl-D-erythritol 2-phosphate</name>
        <dbReference type="ChEBI" id="CHEBI:57919"/>
    </ligand>
</feature>
<feature type="site" description="Transition state stabilizer" evidence="1">
    <location>
        <position position="49"/>
    </location>
</feature>
<feature type="site" description="Transition state stabilizer" evidence="1">
    <location>
        <position position="148"/>
    </location>
</feature>
<reference key="1">
    <citation type="journal article" date="2006" name="J. Bacteriol.">
        <title>The genome of the obligately intracellular bacterium Ehrlichia canis reveals themes of complex membrane structure and immune evasion strategies.</title>
        <authorList>
            <person name="Mavromatis K."/>
            <person name="Doyle C.K."/>
            <person name="Lykidis A."/>
            <person name="Ivanova N."/>
            <person name="Francino M.P."/>
            <person name="Chain P."/>
            <person name="Shin M."/>
            <person name="Malfatti S."/>
            <person name="Larimer F."/>
            <person name="Copeland A."/>
            <person name="Detter J.C."/>
            <person name="Land M."/>
            <person name="Richardson P.M."/>
            <person name="Yu X.J."/>
            <person name="Walker D.H."/>
            <person name="McBride J.W."/>
            <person name="Kyrpides N.C."/>
        </authorList>
    </citation>
    <scope>NUCLEOTIDE SEQUENCE [LARGE SCALE GENOMIC DNA]</scope>
    <source>
        <strain>Jake</strain>
    </source>
</reference>
<gene>
    <name evidence="1" type="primary">ispF</name>
    <name type="ordered locus">Ecaj_0102</name>
</gene>
<evidence type="ECO:0000255" key="1">
    <source>
        <dbReference type="HAMAP-Rule" id="MF_00107"/>
    </source>
</evidence>
<accession>Q3YT02</accession>
<comment type="function">
    <text evidence="1">Involved in the biosynthesis of isopentenyl diphosphate (IPP) and dimethylallyl diphosphate (DMAPP), two major building blocks of isoprenoid compounds. Catalyzes the conversion of 4-diphosphocytidyl-2-C-methyl-D-erythritol 2-phosphate (CDP-ME2P) to 2-C-methyl-D-erythritol 2,4-cyclodiphosphate (ME-CPP) with a corresponding release of cytidine 5-monophosphate (CMP).</text>
</comment>
<comment type="catalytic activity">
    <reaction evidence="1">
        <text>4-CDP-2-C-methyl-D-erythritol 2-phosphate = 2-C-methyl-D-erythritol 2,4-cyclic diphosphate + CMP</text>
        <dbReference type="Rhea" id="RHEA:23864"/>
        <dbReference type="ChEBI" id="CHEBI:57919"/>
        <dbReference type="ChEBI" id="CHEBI:58483"/>
        <dbReference type="ChEBI" id="CHEBI:60377"/>
        <dbReference type="EC" id="4.6.1.12"/>
    </reaction>
</comment>
<comment type="cofactor">
    <cofactor evidence="1">
        <name>a divalent metal cation</name>
        <dbReference type="ChEBI" id="CHEBI:60240"/>
    </cofactor>
    <text evidence="1">Binds 1 divalent metal cation per subunit.</text>
</comment>
<comment type="pathway">
    <text evidence="1">Isoprenoid biosynthesis; isopentenyl diphosphate biosynthesis via DXP pathway; isopentenyl diphosphate from 1-deoxy-D-xylulose 5-phosphate: step 4/6.</text>
</comment>
<comment type="subunit">
    <text evidence="1">Homotrimer.</text>
</comment>
<comment type="similarity">
    <text evidence="1">Belongs to the IspF family.</text>
</comment>
<keyword id="KW-0414">Isoprene biosynthesis</keyword>
<keyword id="KW-0456">Lyase</keyword>
<keyword id="KW-0479">Metal-binding</keyword>
<organism>
    <name type="scientific">Ehrlichia canis (strain Jake)</name>
    <dbReference type="NCBI Taxonomy" id="269484"/>
    <lineage>
        <taxon>Bacteria</taxon>
        <taxon>Pseudomonadati</taxon>
        <taxon>Pseudomonadota</taxon>
        <taxon>Alphaproteobacteria</taxon>
        <taxon>Rickettsiales</taxon>
        <taxon>Anaplasmataceae</taxon>
        <taxon>Ehrlichia</taxon>
    </lineage>
</organism>
<protein>
    <recommendedName>
        <fullName evidence="1">2-C-methyl-D-erythritol 2,4-cyclodiphosphate synthase</fullName>
        <shortName evidence="1">MECDP-synthase</shortName>
        <shortName evidence="1">MECPP-synthase</shortName>
        <shortName evidence="1">MECPS</shortName>
        <ecNumber evidence="1">4.6.1.12</ecNumber>
    </recommendedName>
</protein>
<sequence length="173" mass="19160">MKQHINKPTFKVGIGYDVHKFDNIEYDATNTFITICGIKINHHKKIVAHSDGDVGLHALTDAILGAVGCGSIGQHFPNTDNKWKDAKSDYFLIEAKNKAQEKGYYISNADIIIICEQPKIMPHALKMQEYIANLIKIDTSCINVKATTTEKLGFLGRKEGIAAQAIVLCCLQN</sequence>